<name>RS7_CHLP8</name>
<sequence>MGKKGAGYGLRGGDFRYNDETVARLINAVMLDGKKEVATKVVYDAFDIIASKSEDGDALEVFRKAMSNVAPLVEVRSKRVGGATYQIPMEVQPARRTALAFRWIKQFATRRGGRSMAEKLAAELLDASNEQGASVKKRDEVHRMADANKAFAHFRF</sequence>
<feature type="chain" id="PRO_1000125913" description="Small ribosomal subunit protein uS7">
    <location>
        <begin position="1"/>
        <end position="156"/>
    </location>
</feature>
<organism>
    <name type="scientific">Chlorobaculum parvum (strain DSM 263 / NCIMB 8327)</name>
    <name type="common">Chlorobium vibrioforme subsp. thiosulfatophilum</name>
    <dbReference type="NCBI Taxonomy" id="517417"/>
    <lineage>
        <taxon>Bacteria</taxon>
        <taxon>Pseudomonadati</taxon>
        <taxon>Chlorobiota</taxon>
        <taxon>Chlorobiia</taxon>
        <taxon>Chlorobiales</taxon>
        <taxon>Chlorobiaceae</taxon>
        <taxon>Chlorobaculum</taxon>
    </lineage>
</organism>
<keyword id="KW-0687">Ribonucleoprotein</keyword>
<keyword id="KW-0689">Ribosomal protein</keyword>
<keyword id="KW-0694">RNA-binding</keyword>
<keyword id="KW-0699">rRNA-binding</keyword>
<keyword id="KW-0820">tRNA-binding</keyword>
<proteinExistence type="inferred from homology"/>
<reference key="1">
    <citation type="submission" date="2008-06" db="EMBL/GenBank/DDBJ databases">
        <title>Complete sequence of Chlorobaculum parvum NCIB 8327.</title>
        <authorList>
            <consortium name="US DOE Joint Genome Institute"/>
            <person name="Lucas S."/>
            <person name="Copeland A."/>
            <person name="Lapidus A."/>
            <person name="Glavina del Rio T."/>
            <person name="Dalin E."/>
            <person name="Tice H."/>
            <person name="Bruce D."/>
            <person name="Goodwin L."/>
            <person name="Pitluck S."/>
            <person name="Schmutz J."/>
            <person name="Larimer F."/>
            <person name="Land M."/>
            <person name="Hauser L."/>
            <person name="Kyrpides N."/>
            <person name="Mikhailova N."/>
            <person name="Zhao F."/>
            <person name="Li T."/>
            <person name="Liu Z."/>
            <person name="Overmann J."/>
            <person name="Bryant D.A."/>
            <person name="Richardson P."/>
        </authorList>
    </citation>
    <scope>NUCLEOTIDE SEQUENCE [LARGE SCALE GENOMIC DNA]</scope>
    <source>
        <strain>DSM 263 / NCIMB 8327</strain>
    </source>
</reference>
<accession>B3QR57</accession>
<comment type="function">
    <text evidence="1">One of the primary rRNA binding proteins, it binds directly to 16S rRNA where it nucleates assembly of the head domain of the 30S subunit. Is located at the subunit interface close to the decoding center, probably blocks exit of the E-site tRNA.</text>
</comment>
<comment type="subunit">
    <text evidence="1">Part of the 30S ribosomal subunit. Contacts proteins S9 and S11.</text>
</comment>
<comment type="similarity">
    <text evidence="1">Belongs to the universal ribosomal protein uS7 family.</text>
</comment>
<evidence type="ECO:0000255" key="1">
    <source>
        <dbReference type="HAMAP-Rule" id="MF_00480"/>
    </source>
</evidence>
<evidence type="ECO:0000305" key="2"/>
<dbReference type="EMBL" id="CP001099">
    <property type="protein sequence ID" value="ACF10600.1"/>
    <property type="molecule type" value="Genomic_DNA"/>
</dbReference>
<dbReference type="RefSeq" id="WP_012501435.1">
    <property type="nucleotide sequence ID" value="NC_011027.1"/>
</dbReference>
<dbReference type="SMR" id="B3QR57"/>
<dbReference type="STRING" id="517417.Cpar_0173"/>
<dbReference type="KEGG" id="cpc:Cpar_0173"/>
<dbReference type="eggNOG" id="COG0049">
    <property type="taxonomic scope" value="Bacteria"/>
</dbReference>
<dbReference type="HOGENOM" id="CLU_072226_1_1_10"/>
<dbReference type="OrthoDB" id="9807653at2"/>
<dbReference type="Proteomes" id="UP000008811">
    <property type="component" value="Chromosome"/>
</dbReference>
<dbReference type="GO" id="GO:0015935">
    <property type="term" value="C:small ribosomal subunit"/>
    <property type="evidence" value="ECO:0007669"/>
    <property type="project" value="InterPro"/>
</dbReference>
<dbReference type="GO" id="GO:0019843">
    <property type="term" value="F:rRNA binding"/>
    <property type="evidence" value="ECO:0007669"/>
    <property type="project" value="UniProtKB-UniRule"/>
</dbReference>
<dbReference type="GO" id="GO:0003735">
    <property type="term" value="F:structural constituent of ribosome"/>
    <property type="evidence" value="ECO:0007669"/>
    <property type="project" value="InterPro"/>
</dbReference>
<dbReference type="GO" id="GO:0000049">
    <property type="term" value="F:tRNA binding"/>
    <property type="evidence" value="ECO:0007669"/>
    <property type="project" value="UniProtKB-UniRule"/>
</dbReference>
<dbReference type="GO" id="GO:0006412">
    <property type="term" value="P:translation"/>
    <property type="evidence" value="ECO:0007669"/>
    <property type="project" value="UniProtKB-UniRule"/>
</dbReference>
<dbReference type="CDD" id="cd14869">
    <property type="entry name" value="uS7_Bacteria"/>
    <property type="match status" value="1"/>
</dbReference>
<dbReference type="FunFam" id="1.10.455.10:FF:000001">
    <property type="entry name" value="30S ribosomal protein S7"/>
    <property type="match status" value="1"/>
</dbReference>
<dbReference type="Gene3D" id="1.10.455.10">
    <property type="entry name" value="Ribosomal protein S7 domain"/>
    <property type="match status" value="1"/>
</dbReference>
<dbReference type="HAMAP" id="MF_00480_B">
    <property type="entry name" value="Ribosomal_uS7_B"/>
    <property type="match status" value="1"/>
</dbReference>
<dbReference type="InterPro" id="IPR000235">
    <property type="entry name" value="Ribosomal_uS7"/>
</dbReference>
<dbReference type="InterPro" id="IPR005717">
    <property type="entry name" value="Ribosomal_uS7_bac/org-type"/>
</dbReference>
<dbReference type="InterPro" id="IPR020606">
    <property type="entry name" value="Ribosomal_uS7_CS"/>
</dbReference>
<dbReference type="InterPro" id="IPR023798">
    <property type="entry name" value="Ribosomal_uS7_dom"/>
</dbReference>
<dbReference type="InterPro" id="IPR036823">
    <property type="entry name" value="Ribosomal_uS7_dom_sf"/>
</dbReference>
<dbReference type="NCBIfam" id="TIGR01029">
    <property type="entry name" value="rpsG_bact"/>
    <property type="match status" value="1"/>
</dbReference>
<dbReference type="PANTHER" id="PTHR11205">
    <property type="entry name" value="RIBOSOMAL PROTEIN S7"/>
    <property type="match status" value="1"/>
</dbReference>
<dbReference type="Pfam" id="PF00177">
    <property type="entry name" value="Ribosomal_S7"/>
    <property type="match status" value="1"/>
</dbReference>
<dbReference type="PIRSF" id="PIRSF002122">
    <property type="entry name" value="RPS7p_RPS7a_RPS5e_RPS7o"/>
    <property type="match status" value="1"/>
</dbReference>
<dbReference type="SUPFAM" id="SSF47973">
    <property type="entry name" value="Ribosomal protein S7"/>
    <property type="match status" value="1"/>
</dbReference>
<dbReference type="PROSITE" id="PS00052">
    <property type="entry name" value="RIBOSOMAL_S7"/>
    <property type="match status" value="1"/>
</dbReference>
<gene>
    <name evidence="1" type="primary">rpsG</name>
    <name type="ordered locus">Cpar_0173</name>
</gene>
<protein>
    <recommendedName>
        <fullName evidence="1">Small ribosomal subunit protein uS7</fullName>
    </recommendedName>
    <alternativeName>
        <fullName evidence="2">30S ribosomal protein S7</fullName>
    </alternativeName>
</protein>